<feature type="initiator methionine" description="Removed" evidence="2">
    <location>
        <position position="1"/>
    </location>
</feature>
<feature type="chain" id="PRO_0000078245" description="Heat shock 70 kDa protein 1A">
    <location>
        <begin position="2"/>
        <end position="641"/>
    </location>
</feature>
<feature type="region of interest" description="Nucleotide-binding domain (NBD)" evidence="4">
    <location>
        <begin position="2"/>
        <end position="386"/>
    </location>
</feature>
<feature type="region of interest" description="Substrate-binding domain (SBD)" evidence="4">
    <location>
        <begin position="394"/>
        <end position="509"/>
    </location>
</feature>
<feature type="region of interest" description="Disordered" evidence="6">
    <location>
        <begin position="617"/>
        <end position="641"/>
    </location>
</feature>
<feature type="compositionally biased region" description="Gly residues" evidence="6">
    <location>
        <begin position="617"/>
        <end position="633"/>
    </location>
</feature>
<feature type="binding site" evidence="1">
    <location>
        <begin position="12"/>
        <end position="15"/>
    </location>
    <ligand>
        <name>ATP</name>
        <dbReference type="ChEBI" id="CHEBI:30616"/>
    </ligand>
</feature>
<feature type="binding site" evidence="1">
    <location>
        <position position="71"/>
    </location>
    <ligand>
        <name>ATP</name>
        <dbReference type="ChEBI" id="CHEBI:30616"/>
    </ligand>
</feature>
<feature type="binding site" evidence="1">
    <location>
        <begin position="202"/>
        <end position="204"/>
    </location>
    <ligand>
        <name>ATP</name>
        <dbReference type="ChEBI" id="CHEBI:30616"/>
    </ligand>
</feature>
<feature type="binding site" evidence="1">
    <location>
        <begin position="268"/>
        <end position="275"/>
    </location>
    <ligand>
        <name>ATP</name>
        <dbReference type="ChEBI" id="CHEBI:30616"/>
    </ligand>
</feature>
<feature type="binding site" evidence="1">
    <location>
        <begin position="339"/>
        <end position="342"/>
    </location>
    <ligand>
        <name>ATP</name>
        <dbReference type="ChEBI" id="CHEBI:30616"/>
    </ligand>
</feature>
<feature type="modified residue" description="N-acetylalanine" evidence="2">
    <location>
        <position position="2"/>
    </location>
</feature>
<feature type="modified residue" description="N6-acetyllysine" evidence="2">
    <location>
        <position position="77"/>
    </location>
</feature>
<feature type="modified residue" description="N6-acetyllysine" evidence="2">
    <location>
        <position position="108"/>
    </location>
</feature>
<feature type="modified residue" description="N6-acetyllysine" evidence="2">
    <location>
        <position position="246"/>
    </location>
</feature>
<feature type="modified residue" description="N6-acetyllysine" evidence="2">
    <location>
        <position position="348"/>
    </location>
</feature>
<feature type="modified residue" description="Omega-N-methylarginine" evidence="2">
    <location>
        <position position="469"/>
    </location>
</feature>
<feature type="modified residue" description="N6,N6,N6-trimethyllysine; by METTL21A; in vitro" evidence="2">
    <location>
        <position position="561"/>
    </location>
</feature>
<feature type="modified residue" description="N6,N6-dimethyllysine" evidence="2">
    <location>
        <position position="561"/>
    </location>
</feature>
<feature type="modified residue" description="Phosphoserine" evidence="2">
    <location>
        <position position="631"/>
    </location>
</feature>
<feature type="modified residue" description="Phosphoserine" evidence="2">
    <location>
        <position position="633"/>
    </location>
</feature>
<feature type="modified residue" description="Phosphothreonine" evidence="2">
    <location>
        <position position="636"/>
    </location>
</feature>
<feature type="sequence conflict" description="In Ref. 3; AAT75223." evidence="7" ref="3">
    <original>N</original>
    <variation>S</variation>
    <location>
        <position position="57"/>
    </location>
</feature>
<feature type="sequence conflict" description="In Ref. 1; AAA73914." evidence="7" ref="1">
    <original>H</original>
    <variation>E</variation>
    <location>
        <position position="89"/>
    </location>
</feature>
<reference key="1">
    <citation type="journal article" date="1995" name="Biochem. J.">
        <title>Chemical modifications of a recombinant bovine stress-inducible 70 kDa heat-shock protein (Hsp70) mimics Hsp70 isoforms from tissues.</title>
        <authorList>
            <person name="Gutierrez J.A."/>
            <person name="Guerriero V."/>
        </authorList>
    </citation>
    <scope>NUCLEOTIDE SEQUENCE [MRNA]</scope>
    <source>
        <tissue>Skeletal muscle</tissue>
    </source>
</reference>
<reference key="2">
    <citation type="journal article" date="2003" name="Anim. Genet.">
        <title>Deletion of one of the duplicated Hsp70 genes causes hereditary myopathy of diaphragmatic muscles in Holstein-Friesian cattle.</title>
        <authorList>
            <person name="Sugimoto M."/>
            <person name="Furuoka H."/>
            <person name="Sugimoto Y."/>
        </authorList>
    </citation>
    <scope>NUCLEOTIDE SEQUENCE [GENOMIC DNA]</scope>
    <source>
        <strain>Holstein-Friesian</strain>
    </source>
</reference>
<reference key="3">
    <citation type="journal article" date="2004" name="Biochemistry">
        <title>Molecular cloning of bovine cardiac muscle heat-shock protein 70 kDa and its phosphorylation by cAMP-dependent protein kinase in vitro.</title>
        <authorList>
            <person name="Lakshmikuttyamma A."/>
            <person name="Selvakumar P."/>
            <person name="Anderson D.H."/>
            <person name="Datla R.S."/>
            <person name="Sharma R.K."/>
        </authorList>
    </citation>
    <scope>NUCLEOTIDE SEQUENCE [MRNA]</scope>
    <source>
        <tissue>Heart muscle</tissue>
    </source>
</reference>
<reference key="4">
    <citation type="journal article" date="1994" name="Anim. Genet.">
        <title>An AluI polymorphism at the bovine 70 kD heat-shock protein-1 (HSP70-1) locus.</title>
        <authorList>
            <person name="Grosz M.D."/>
            <person name="Skow L.C."/>
            <person name="Stone R.T."/>
        </authorList>
    </citation>
    <scope>NUCLEOTIDE SEQUENCE [GENOMIC DNA] OF 212-641</scope>
    <source>
        <strain>Angus</strain>
    </source>
</reference>
<accession>Q27975</accession>
<accession>Q27964</accession>
<accession>Q6DLW1</accession>
<accession>Q7YQF7</accession>
<protein>
    <recommendedName>
        <fullName>Heat shock 70 kDa protein 1A</fullName>
    </recommendedName>
    <alternativeName>
        <fullName>Heat shock 70 kDa protein 1</fullName>
        <shortName>HSP70.1</shortName>
    </alternativeName>
</protein>
<evidence type="ECO:0000250" key="1"/>
<evidence type="ECO:0000250" key="2">
    <source>
        <dbReference type="UniProtKB" id="P0DMV8"/>
    </source>
</evidence>
<evidence type="ECO:0000250" key="3">
    <source>
        <dbReference type="UniProtKB" id="P0DMW0"/>
    </source>
</evidence>
<evidence type="ECO:0000250" key="4">
    <source>
        <dbReference type="UniProtKB" id="P11142"/>
    </source>
</evidence>
<evidence type="ECO:0000250" key="5">
    <source>
        <dbReference type="UniProtKB" id="Q61696"/>
    </source>
</evidence>
<evidence type="ECO:0000256" key="6">
    <source>
        <dbReference type="SAM" id="MobiDB-lite"/>
    </source>
</evidence>
<evidence type="ECO:0000305" key="7"/>
<comment type="function">
    <text evidence="2 3">Molecular chaperone implicated in a wide variety of cellular processes, including protection of the proteome from stress, folding and transport of newly synthesized polypeptides, activation of proteolysis of misfolded proteins and the formation and dissociation of protein complexes. Plays a pivotal role in the protein quality control system, ensuring the correct folding of proteins, the re-folding of misfolded proteins and controlling the targeting of proteins for subsequent degradation. This is achieved through cycles of ATP binding, ATP hydrolysis and ADP release, mediated by co-chaperones. The co-chaperones have been shown to not only regulate different steps of the ATPase cycle, but they also have an individual specificity such that one co-chaperone may promote folding of a substrate while another may promote degradation. The affinity for polypeptides is regulated by its nucleotide bound state. In the ATP-bound form, it has a low affinity for substrate proteins. However, upon hydrolysis of the ATP to ADP, it undergoes a conformational change that increases its affinity for substrate proteins. It goes through repeated cycles of ATP hydrolysis and nucleotide exchange, which permits cycles of substrate binding and release. The co-chaperones are of three types: J-domain co-chaperones such as HSP40s (stimulate ATPase hydrolysis by HSP70), the nucleotide exchange factors (NEF) such as BAG1/2/3 (facilitate conversion of HSP70 from the ADP-bound to the ATP-bound state thereby promoting substrate release), and the TPR domain chaperones such as HOPX and STUB1. Maintains protein homeostasis during cellular stress through two opposing mechanisms: protein refolding and degradation. Its acetylation/deacetylation state determines whether it functions in protein refolding or protein degradation by controlling the competitive binding of co-chaperones HOPX and STUB1. During the early stress response, the acetylated form binds to HOPX which assists in chaperone-mediated protein refolding, thereafter, it is deacetylated and binds to ubiquitin ligase STUB1 that promotes ubiquitin-mediated protein degradation. Regulates centrosome integrity during mitosis, and is required for the maintenance of a functional mitotic centrosome that supports the assembly of a bipolar mitotic spindle. Enhances STUB1-mediated SMAD3 ubiquitination and degradation and facilitates STUB1-mediated inhibition of TGF-beta signaling. Essential for STUB1-mediated ubiquitination and degradation of FOXP3 in regulatory T-cells (Treg) during inflammation. Required as a co-chaperone for optimal STUB1/CHIP ubiquitination of NFATC3 (By similarity). Negatively regulates heat shock-induced HSF1 transcriptional activity during the attenuation and recovery phase period of the heat shock response.</text>
</comment>
<comment type="subunit">
    <text evidence="2 3 5">Component of the CatSper complex. Identified in a IGF2BP1-dependent mRNP granule complex containing untranslated mRNAs. Interacts with CHCHD3, DNAJC7, IRAK1BP1, PPP5C and TSC2. Interacts with TERT; the interaction occurs in the absence of the RNA component, TERC, and dissociates once the TERT complex has formed. Interacts with TRIM5 (via B30.2/SPRY domain). Interacts with METTL21A. Interacts with DNAAF2. Interacts with PRKN. Interacts with FOXP3. Interacts with NOD2; the interaction enhances NOD2 stability. Interacts with DNAJC9 (via J domain). Interacts with ATF5; the interaction protects ATF5 from degradation via proteasome-dependent and caspase-dependent processes. Interacts with RNF207 (via the C-terminus); this interaction additively increases KCNH2 expression. Interacts with HSF1 (via transactivation domain); this interaction results in the inhibition of heat shock- and HSF1-induced transcriptional activity during the attenuation and recovery phase period of the heat shock response. Interacts with NAA10, HSP40, HSP90 and HDAC4. Interacts (via C-terminus) with STUB1 (via TPR repeats) (By similarity). The acetylated form and the non-acetylated form interact with HOPX and STUB1 respectively. Interacts with NEDD1 and SMAD3. Interacts (via NBD) with BAG1, BAG2, BAG3 and HSPH1/HSP105. Interacts with DNAJC8. Interacts with NLRP12. Forms a ternary complex with BAG3 and HSPB8 (By similarity).</text>
</comment>
<comment type="interaction">
    <interactant intactId="EBI-6477341">
        <id>Q27975</id>
    </interactant>
    <interactant intactId="EBI-6477285">
        <id>P02639</id>
        <label>S100A1</label>
    </interactant>
    <organismsDiffer>false</organismsDiffer>
    <experiments>2</experiments>
</comment>
<comment type="subcellular location">
    <subcellularLocation>
        <location evidence="2">Cytoplasm</location>
    </subcellularLocation>
    <subcellularLocation>
        <location evidence="2">Nucleus</location>
    </subcellularLocation>
    <subcellularLocation>
        <location evidence="2">Cytoplasm</location>
        <location evidence="2">Cytoskeleton</location>
        <location evidence="2">Microtubule organizing center</location>
        <location evidence="2">Centrosome</location>
    </subcellularLocation>
    <text evidence="2">Localized in cytoplasmic mRNP granules containing untranslated mRNAs.</text>
</comment>
<comment type="induction">
    <text>By heat shock.</text>
</comment>
<comment type="domain">
    <text evidence="2">The N-terminal nucleotide binding domain (NBD) (also known as the ATPase domain) is responsible for binding and hydrolyzing ATP. The C-terminal substrate-binding domain (SBD) (also known as peptide-binding domain) binds to the client/substrate proteins. The two domains are allosterically coupled so that, when ATP is bound to the NBD, the SBD binds relatively weakly to clients. When ADP is bound in the NBD, a conformational change enhances the affinity of the SBD for client proteins.</text>
</comment>
<comment type="PTM">
    <text evidence="2">In response to cellular stress, acetylated at Lys-77 by NA110 and then gradually deacetylated by HDAC4 at later stages. Acetylation enhances its chaperone activity and also determines whether it will function as a chaperone for protein refolding or degradation by controlling its binding to co-chaperones HOPX and STUB1. The acetylated form and the non-acetylated form bind to HOPX and STUB1 respectively. Acetylation also protects cells against various types of cellular stress.</text>
</comment>
<comment type="similarity">
    <text evidence="7">Belongs to the heat shock protein 70 family.</text>
</comment>
<dbReference type="EMBL" id="U09861">
    <property type="protein sequence ID" value="AAA73914.1"/>
    <property type="molecule type" value="mRNA"/>
</dbReference>
<dbReference type="EMBL" id="AY149618">
    <property type="protein sequence ID" value="AAN78092.1"/>
    <property type="molecule type" value="Genomic_DNA"/>
</dbReference>
<dbReference type="EMBL" id="AY149619">
    <property type="protein sequence ID" value="AAN78094.1"/>
    <property type="molecule type" value="Genomic_DNA"/>
</dbReference>
<dbReference type="EMBL" id="AY662497">
    <property type="protein sequence ID" value="AAT75223.1"/>
    <property type="molecule type" value="mRNA"/>
</dbReference>
<dbReference type="EMBL" id="U02891">
    <property type="protein sequence ID" value="AAA03450.1"/>
    <property type="molecule type" value="Unassigned_DNA"/>
</dbReference>
<dbReference type="PIR" id="S53357">
    <property type="entry name" value="S53357"/>
</dbReference>
<dbReference type="RefSeq" id="NP_776975.1">
    <property type="nucleotide sequence ID" value="NM_174550.1"/>
</dbReference>
<dbReference type="RefSeq" id="NP_976067.3">
    <property type="nucleotide sequence ID" value="NM_203322.3"/>
</dbReference>
<dbReference type="BMRB" id="Q27975"/>
<dbReference type="SMR" id="Q27975"/>
<dbReference type="BioGRID" id="159138">
    <property type="interactions" value="1"/>
</dbReference>
<dbReference type="FunCoup" id="Q27975">
    <property type="interactions" value="1813"/>
</dbReference>
<dbReference type="IntAct" id="Q27975">
    <property type="interactions" value="1"/>
</dbReference>
<dbReference type="STRING" id="9913.ENSBTAP00000017500"/>
<dbReference type="PaxDb" id="9913-ENSBTAP00000017500"/>
<dbReference type="GeneID" id="282254"/>
<dbReference type="KEGG" id="bta:282254"/>
<dbReference type="CTD" id="3303"/>
<dbReference type="VEuPathDB" id="HostDB:ENSBTAG00000025441"/>
<dbReference type="eggNOG" id="KOG0101">
    <property type="taxonomic scope" value="Eukaryota"/>
</dbReference>
<dbReference type="HOGENOM" id="CLU_005965_3_0_1"/>
<dbReference type="InParanoid" id="Q27975"/>
<dbReference type="OMA" id="CNPIMTR"/>
<dbReference type="OrthoDB" id="2401965at2759"/>
<dbReference type="TreeFam" id="TF105042"/>
<dbReference type="Reactome" id="R-BTA-3371453">
    <property type="pathway name" value="Regulation of HSF1-mediated heat shock response"/>
</dbReference>
<dbReference type="Reactome" id="R-BTA-3371497">
    <property type="pathway name" value="HSP90 chaperone cycle for steroid hormone receptors (SHR) in the presence of ligand"/>
</dbReference>
<dbReference type="Reactome" id="R-BTA-3371568">
    <property type="pathway name" value="Attenuation phase"/>
</dbReference>
<dbReference type="Reactome" id="R-BTA-3371571">
    <property type="pathway name" value="HSF1-dependent transactivation"/>
</dbReference>
<dbReference type="Reactome" id="R-BTA-450408">
    <property type="pathway name" value="AUF1 (hnRNP D0) binds and destabilizes mRNA"/>
</dbReference>
<dbReference type="Reactome" id="R-BTA-6798695">
    <property type="pathway name" value="Neutrophil degranulation"/>
</dbReference>
<dbReference type="Reactome" id="R-BTA-9833482">
    <property type="pathway name" value="PKR-mediated signaling"/>
</dbReference>
<dbReference type="Reactome" id="R-BTA-9841251">
    <property type="pathway name" value="Mitochondrial unfolded protein response (UPRmt)"/>
</dbReference>
<dbReference type="PRO" id="PR:Q27975"/>
<dbReference type="Proteomes" id="UP000009136">
    <property type="component" value="Chromosome 23"/>
</dbReference>
<dbReference type="Bgee" id="ENSBTAG00000025441">
    <property type="expression patterns" value="Expressed in intramuscular adipose tissue and 106 other cell types or tissues"/>
</dbReference>
<dbReference type="GO" id="GO:0005813">
    <property type="term" value="C:centrosome"/>
    <property type="evidence" value="ECO:0000250"/>
    <property type="project" value="UniProtKB"/>
</dbReference>
<dbReference type="GO" id="GO:0005737">
    <property type="term" value="C:cytoplasm"/>
    <property type="evidence" value="ECO:0000314"/>
    <property type="project" value="CAFA"/>
</dbReference>
<dbReference type="GO" id="GO:0005829">
    <property type="term" value="C:cytosol"/>
    <property type="evidence" value="ECO:0000318"/>
    <property type="project" value="GO_Central"/>
</dbReference>
<dbReference type="GO" id="GO:0005634">
    <property type="term" value="C:nucleus"/>
    <property type="evidence" value="ECO:0000318"/>
    <property type="project" value="GO_Central"/>
</dbReference>
<dbReference type="GO" id="GO:0005886">
    <property type="term" value="C:plasma membrane"/>
    <property type="evidence" value="ECO:0000318"/>
    <property type="project" value="GO_Central"/>
</dbReference>
<dbReference type="GO" id="GO:0005524">
    <property type="term" value="F:ATP binding"/>
    <property type="evidence" value="ECO:0007669"/>
    <property type="project" value="UniProtKB-KW"/>
</dbReference>
<dbReference type="GO" id="GO:0016887">
    <property type="term" value="F:ATP hydrolysis activity"/>
    <property type="evidence" value="ECO:0000318"/>
    <property type="project" value="GO_Central"/>
</dbReference>
<dbReference type="GO" id="GO:0140662">
    <property type="term" value="F:ATP-dependent protein folding chaperone"/>
    <property type="evidence" value="ECO:0007669"/>
    <property type="project" value="InterPro"/>
</dbReference>
<dbReference type="GO" id="GO:0097718">
    <property type="term" value="F:disordered domain specific binding"/>
    <property type="evidence" value="ECO:0000353"/>
    <property type="project" value="CAFA"/>
</dbReference>
<dbReference type="GO" id="GO:0031072">
    <property type="term" value="F:heat shock protein binding"/>
    <property type="evidence" value="ECO:0000318"/>
    <property type="project" value="GO_Central"/>
</dbReference>
<dbReference type="GO" id="GO:0044183">
    <property type="term" value="F:protein folding chaperone"/>
    <property type="evidence" value="ECO:0000318"/>
    <property type="project" value="GO_Central"/>
</dbReference>
<dbReference type="GO" id="GO:0003714">
    <property type="term" value="F:transcription corepressor activity"/>
    <property type="evidence" value="ECO:0000250"/>
    <property type="project" value="UniProtKB"/>
</dbReference>
<dbReference type="GO" id="GO:0051085">
    <property type="term" value="P:chaperone cofactor-dependent protein refolding"/>
    <property type="evidence" value="ECO:0000318"/>
    <property type="project" value="GO_Central"/>
</dbReference>
<dbReference type="GO" id="GO:0007041">
    <property type="term" value="P:lysosomal transport"/>
    <property type="evidence" value="ECO:0000250"/>
    <property type="project" value="UniProtKB"/>
</dbReference>
<dbReference type="GO" id="GO:0000122">
    <property type="term" value="P:negative regulation of transcription by RNA polymerase II"/>
    <property type="evidence" value="ECO:0000250"/>
    <property type="project" value="UniProtKB"/>
</dbReference>
<dbReference type="GO" id="GO:0090063">
    <property type="term" value="P:positive regulation of microtubule nucleation"/>
    <property type="evidence" value="ECO:0000250"/>
    <property type="project" value="UniProtKB"/>
</dbReference>
<dbReference type="GO" id="GO:0032436">
    <property type="term" value="P:positive regulation of proteasomal ubiquitin-dependent protein catabolic process"/>
    <property type="evidence" value="ECO:0000318"/>
    <property type="project" value="GO_Central"/>
</dbReference>
<dbReference type="GO" id="GO:0042026">
    <property type="term" value="P:protein refolding"/>
    <property type="evidence" value="ECO:0000250"/>
    <property type="project" value="UniProtKB"/>
</dbReference>
<dbReference type="GO" id="GO:1901673">
    <property type="term" value="P:regulation of mitotic spindle assembly"/>
    <property type="evidence" value="ECO:0000250"/>
    <property type="project" value="UniProtKB"/>
</dbReference>
<dbReference type="CDD" id="cd10233">
    <property type="entry name" value="ASKHA_NBD_HSP70_HSPA1"/>
    <property type="match status" value="1"/>
</dbReference>
<dbReference type="FunFam" id="2.60.34.10:FF:000002">
    <property type="entry name" value="Heat shock 70 kDa"/>
    <property type="match status" value="1"/>
</dbReference>
<dbReference type="FunFam" id="3.30.420.40:FF:000172">
    <property type="entry name" value="Heat shock 70 kDa protein"/>
    <property type="match status" value="1"/>
</dbReference>
<dbReference type="FunFam" id="3.30.30.30:FF:000001">
    <property type="entry name" value="heat shock 70 kDa protein-like"/>
    <property type="match status" value="1"/>
</dbReference>
<dbReference type="FunFam" id="3.30.420.40:FF:000028">
    <property type="entry name" value="heat shock 70 kDa protein-like"/>
    <property type="match status" value="1"/>
</dbReference>
<dbReference type="FunFam" id="3.30.420.40:FF:000135">
    <property type="entry name" value="Heat shock cognate 71 kDa protein"/>
    <property type="match status" value="1"/>
</dbReference>
<dbReference type="FunFam" id="3.90.640.10:FF:000134">
    <property type="entry name" value="Heat shock cognate 71 kDa protein"/>
    <property type="match status" value="1"/>
</dbReference>
<dbReference type="FunFam" id="1.20.1270.10:FF:000003">
    <property type="entry name" value="heat shock cognate 71 kDa protein-like"/>
    <property type="match status" value="1"/>
</dbReference>
<dbReference type="FunFam" id="3.30.420.40:FF:000026">
    <property type="entry name" value="Heat shock protein 70"/>
    <property type="match status" value="1"/>
</dbReference>
<dbReference type="Gene3D" id="1.20.1270.10">
    <property type="match status" value="1"/>
</dbReference>
<dbReference type="Gene3D" id="3.30.30.30">
    <property type="match status" value="1"/>
</dbReference>
<dbReference type="Gene3D" id="3.30.420.40">
    <property type="match status" value="2"/>
</dbReference>
<dbReference type="Gene3D" id="3.90.640.10">
    <property type="entry name" value="Actin, Chain A, domain 4"/>
    <property type="match status" value="1"/>
</dbReference>
<dbReference type="Gene3D" id="2.60.34.10">
    <property type="entry name" value="Substrate Binding Domain Of DNAk, Chain A, domain 1"/>
    <property type="match status" value="1"/>
</dbReference>
<dbReference type="InterPro" id="IPR043129">
    <property type="entry name" value="ATPase_NBD"/>
</dbReference>
<dbReference type="InterPro" id="IPR018181">
    <property type="entry name" value="Heat_shock_70_CS"/>
</dbReference>
<dbReference type="InterPro" id="IPR029048">
    <property type="entry name" value="HSP70_C_sf"/>
</dbReference>
<dbReference type="InterPro" id="IPR029047">
    <property type="entry name" value="HSP70_peptide-bd_sf"/>
</dbReference>
<dbReference type="InterPro" id="IPR013126">
    <property type="entry name" value="Hsp_70_fam"/>
</dbReference>
<dbReference type="NCBIfam" id="NF001413">
    <property type="entry name" value="PRK00290.1"/>
    <property type="match status" value="1"/>
</dbReference>
<dbReference type="PANTHER" id="PTHR19375">
    <property type="entry name" value="HEAT SHOCK PROTEIN 70KDA"/>
    <property type="match status" value="1"/>
</dbReference>
<dbReference type="Pfam" id="PF00012">
    <property type="entry name" value="HSP70"/>
    <property type="match status" value="1"/>
</dbReference>
<dbReference type="PRINTS" id="PR00301">
    <property type="entry name" value="HEATSHOCK70"/>
</dbReference>
<dbReference type="SUPFAM" id="SSF53067">
    <property type="entry name" value="Actin-like ATPase domain"/>
    <property type="match status" value="2"/>
</dbReference>
<dbReference type="SUPFAM" id="SSF100934">
    <property type="entry name" value="Heat shock protein 70kD (HSP70), C-terminal subdomain"/>
    <property type="match status" value="1"/>
</dbReference>
<dbReference type="SUPFAM" id="SSF100920">
    <property type="entry name" value="Heat shock protein 70kD (HSP70), peptide-binding domain"/>
    <property type="match status" value="1"/>
</dbReference>
<dbReference type="PROSITE" id="PS00297">
    <property type="entry name" value="HSP70_1"/>
    <property type="match status" value="1"/>
</dbReference>
<dbReference type="PROSITE" id="PS00329">
    <property type="entry name" value="HSP70_2"/>
    <property type="match status" value="1"/>
</dbReference>
<dbReference type="PROSITE" id="PS01036">
    <property type="entry name" value="HSP70_3"/>
    <property type="match status" value="1"/>
</dbReference>
<keyword id="KW-0007">Acetylation</keyword>
<keyword id="KW-0067">ATP-binding</keyword>
<keyword id="KW-0143">Chaperone</keyword>
<keyword id="KW-0963">Cytoplasm</keyword>
<keyword id="KW-0206">Cytoskeleton</keyword>
<keyword id="KW-0488">Methylation</keyword>
<keyword id="KW-0547">Nucleotide-binding</keyword>
<keyword id="KW-0539">Nucleus</keyword>
<keyword id="KW-0597">Phosphoprotein</keyword>
<keyword id="KW-1185">Reference proteome</keyword>
<keyword id="KW-0346">Stress response</keyword>
<sequence>MAKNMAIGIDLGTTYSCVGVFQHGKVEIIANDQGNRTTPSYVAFTDTERLIGDAAKNQVALNPQNTVFDAKRLIGRKFGDPVVQSDMKHWPFRVINDGDKPKVQVSYKGETKAFYPEEISSMVLTKMKEIAEAYLGHPVTNAVITVPAYFNDSQRQATKDAGVIAGLNVLRIINEPTAAAIAYGLDRTGKGERNVLIFDLGGGTFDVSILTIDDGIFEVKATAGDTHLGGEDFDNRLVNHFVEEFKRKHKKDISQNKRAVRRLRTACERAKRTLSSSTQASLEIDSLFEGIDFYTSITRARFEELCSDLFRSTLEPVEKALRDAKLDKAQIHDLVLVGGSTRIPKVQKLLQDFFNGRDLNKSINPDEAVAYGAAVQAAILMGDKSENVQDLLLLDVAPLSLGLETAGGVMTALIKRNSTIPTKQTQIFTTYSDNQPGVLIQVYEGERAMTRDNNLLGRFELSGIPPAPRGVPQIEVTFDIDANGILNVTATDKSTGKANKITITNDKGRLSKEEIERMVQEAEKYKAEDEVQRERVSAKNALESYAFNMKSAVEDEGLKGKISEADKKKVLDKCQEVISWLDANTLAEKDEFEHKRKELEQVCNPIISRLYQGAGGPGAGGFGAQGPKGGSGSGPTIEEVD</sequence>
<proteinExistence type="evidence at protein level"/>
<name>HS71A_BOVIN</name>
<organism>
    <name type="scientific">Bos taurus</name>
    <name type="common">Bovine</name>
    <dbReference type="NCBI Taxonomy" id="9913"/>
    <lineage>
        <taxon>Eukaryota</taxon>
        <taxon>Metazoa</taxon>
        <taxon>Chordata</taxon>
        <taxon>Craniata</taxon>
        <taxon>Vertebrata</taxon>
        <taxon>Euteleostomi</taxon>
        <taxon>Mammalia</taxon>
        <taxon>Eutheria</taxon>
        <taxon>Laurasiatheria</taxon>
        <taxon>Artiodactyla</taxon>
        <taxon>Ruminantia</taxon>
        <taxon>Pecora</taxon>
        <taxon>Bovidae</taxon>
        <taxon>Bovinae</taxon>
        <taxon>Bos</taxon>
    </lineage>
</organism>
<gene>
    <name type="primary">HSPA1A</name>
    <name type="synonym">HSP70-1</name>
</gene>